<organism>
    <name type="scientific">Xylella fastidiosa (strain M23)</name>
    <dbReference type="NCBI Taxonomy" id="405441"/>
    <lineage>
        <taxon>Bacteria</taxon>
        <taxon>Pseudomonadati</taxon>
        <taxon>Pseudomonadota</taxon>
        <taxon>Gammaproteobacteria</taxon>
        <taxon>Lysobacterales</taxon>
        <taxon>Lysobacteraceae</taxon>
        <taxon>Xylella</taxon>
    </lineage>
</organism>
<proteinExistence type="inferred from homology"/>
<name>MTNC_XYLF2</name>
<protein>
    <recommendedName>
        <fullName evidence="1">Enolase-phosphatase E1</fullName>
        <ecNumber evidence="1">3.1.3.77</ecNumber>
    </recommendedName>
    <alternativeName>
        <fullName evidence="1">2,3-diketo-5-methylthio-1-phosphopentane phosphatase</fullName>
    </alternativeName>
</protein>
<evidence type="ECO:0000255" key="1">
    <source>
        <dbReference type="HAMAP-Rule" id="MF_01681"/>
    </source>
</evidence>
<accession>B2I5X4</accession>
<comment type="function">
    <text evidence="1">Bifunctional enzyme that catalyzes the enolization of 2,3-diketo-5-methylthiopentyl-1-phosphate (DK-MTP-1-P) into the intermediate 2-hydroxy-3-keto-5-methylthiopentenyl-1-phosphate (HK-MTPenyl-1-P), which is then dephosphorylated to form the acireductone 1,2-dihydroxy-3-keto-5-methylthiopentene (DHK-MTPene).</text>
</comment>
<comment type="catalytic activity">
    <reaction evidence="1">
        <text>5-methylsulfanyl-2,3-dioxopentyl phosphate + H2O = 1,2-dihydroxy-5-(methylsulfanyl)pent-1-en-3-one + phosphate</text>
        <dbReference type="Rhea" id="RHEA:21700"/>
        <dbReference type="ChEBI" id="CHEBI:15377"/>
        <dbReference type="ChEBI" id="CHEBI:43474"/>
        <dbReference type="ChEBI" id="CHEBI:49252"/>
        <dbReference type="ChEBI" id="CHEBI:58828"/>
        <dbReference type="EC" id="3.1.3.77"/>
    </reaction>
</comment>
<comment type="cofactor">
    <cofactor evidence="1">
        <name>Mg(2+)</name>
        <dbReference type="ChEBI" id="CHEBI:18420"/>
    </cofactor>
    <text evidence="1">Binds 1 Mg(2+) ion per subunit.</text>
</comment>
<comment type="pathway">
    <text evidence="1">Amino-acid biosynthesis; L-methionine biosynthesis via salvage pathway; L-methionine from S-methyl-5-thio-alpha-D-ribose 1-phosphate: step 3/6.</text>
</comment>
<comment type="pathway">
    <text evidence="1">Amino-acid biosynthesis; L-methionine biosynthesis via salvage pathway; L-methionine from S-methyl-5-thio-alpha-D-ribose 1-phosphate: step 4/6.</text>
</comment>
<comment type="subunit">
    <text evidence="1">Monomer.</text>
</comment>
<comment type="similarity">
    <text evidence="1">Belongs to the HAD-like hydrolase superfamily. MasA/MtnC family.</text>
</comment>
<dbReference type="EC" id="3.1.3.77" evidence="1"/>
<dbReference type="EMBL" id="CP001011">
    <property type="protein sequence ID" value="ACB92763.1"/>
    <property type="molecule type" value="Genomic_DNA"/>
</dbReference>
<dbReference type="RefSeq" id="WP_004088321.1">
    <property type="nucleotide sequence ID" value="NC_010577.1"/>
</dbReference>
<dbReference type="SMR" id="B2I5X4"/>
<dbReference type="GeneID" id="93905071"/>
<dbReference type="KEGG" id="xfn:XfasM23_1345"/>
<dbReference type="HOGENOM" id="CLU_023273_0_0_6"/>
<dbReference type="UniPathway" id="UPA00904">
    <property type="reaction ID" value="UER00876"/>
</dbReference>
<dbReference type="UniPathway" id="UPA00904">
    <property type="reaction ID" value="UER00877"/>
</dbReference>
<dbReference type="Proteomes" id="UP000001698">
    <property type="component" value="Chromosome"/>
</dbReference>
<dbReference type="GO" id="GO:0043715">
    <property type="term" value="F:2,3-diketo-5-methylthiopentyl-1-phosphate enolase activity"/>
    <property type="evidence" value="ECO:0007669"/>
    <property type="project" value="UniProtKB-UniRule"/>
</dbReference>
<dbReference type="GO" id="GO:0043716">
    <property type="term" value="F:2-hydroxy-3-keto-5-methylthiopentenyl-1-phosphate phosphatase activity"/>
    <property type="evidence" value="ECO:0007669"/>
    <property type="project" value="UniProtKB-UniRule"/>
</dbReference>
<dbReference type="GO" id="GO:0043874">
    <property type="term" value="F:acireductone synthase activity"/>
    <property type="evidence" value="ECO:0007669"/>
    <property type="project" value="UniProtKB-EC"/>
</dbReference>
<dbReference type="GO" id="GO:0000287">
    <property type="term" value="F:magnesium ion binding"/>
    <property type="evidence" value="ECO:0007669"/>
    <property type="project" value="UniProtKB-UniRule"/>
</dbReference>
<dbReference type="GO" id="GO:0019509">
    <property type="term" value="P:L-methionine salvage from methylthioadenosine"/>
    <property type="evidence" value="ECO:0007669"/>
    <property type="project" value="UniProtKB-UniRule"/>
</dbReference>
<dbReference type="CDD" id="cd01629">
    <property type="entry name" value="HAD_EP"/>
    <property type="match status" value="1"/>
</dbReference>
<dbReference type="Gene3D" id="1.10.720.60">
    <property type="match status" value="1"/>
</dbReference>
<dbReference type="Gene3D" id="3.40.50.1000">
    <property type="entry name" value="HAD superfamily/HAD-like"/>
    <property type="match status" value="1"/>
</dbReference>
<dbReference type="HAMAP" id="MF_01681">
    <property type="entry name" value="Salvage_MtnC"/>
    <property type="match status" value="1"/>
</dbReference>
<dbReference type="InterPro" id="IPR023943">
    <property type="entry name" value="Enolase-ppase_E1"/>
</dbReference>
<dbReference type="InterPro" id="IPR036412">
    <property type="entry name" value="HAD-like_sf"/>
</dbReference>
<dbReference type="InterPro" id="IPR006439">
    <property type="entry name" value="HAD-SF_hydro_IA"/>
</dbReference>
<dbReference type="InterPro" id="IPR023214">
    <property type="entry name" value="HAD_sf"/>
</dbReference>
<dbReference type="NCBIfam" id="TIGR01691">
    <property type="entry name" value="enolase-ppase"/>
    <property type="match status" value="1"/>
</dbReference>
<dbReference type="NCBIfam" id="TIGR01549">
    <property type="entry name" value="HAD-SF-IA-v1"/>
    <property type="match status" value="1"/>
</dbReference>
<dbReference type="PANTHER" id="PTHR20371">
    <property type="entry name" value="ENOLASE-PHOSPHATASE E1"/>
    <property type="match status" value="1"/>
</dbReference>
<dbReference type="PANTHER" id="PTHR20371:SF1">
    <property type="entry name" value="ENOLASE-PHOSPHATASE E1"/>
    <property type="match status" value="1"/>
</dbReference>
<dbReference type="Pfam" id="PF00702">
    <property type="entry name" value="Hydrolase"/>
    <property type="match status" value="1"/>
</dbReference>
<dbReference type="SFLD" id="SFLDG01129">
    <property type="entry name" value="C1.5:_HAD__Beta-PGM__Phosphata"/>
    <property type="match status" value="1"/>
</dbReference>
<dbReference type="SFLD" id="SFLDF00044">
    <property type="entry name" value="enolase-phosphatase"/>
    <property type="match status" value="1"/>
</dbReference>
<dbReference type="SUPFAM" id="SSF56784">
    <property type="entry name" value="HAD-like"/>
    <property type="match status" value="1"/>
</dbReference>
<keyword id="KW-0028">Amino-acid biosynthesis</keyword>
<keyword id="KW-0378">Hydrolase</keyword>
<keyword id="KW-0460">Magnesium</keyword>
<keyword id="KW-0479">Metal-binding</keyword>
<keyword id="KW-0486">Methionine biosynthesis</keyword>
<reference key="1">
    <citation type="journal article" date="2010" name="J. Bacteriol.">
        <title>Whole genome sequences of two Xylella fastidiosa strains (M12 and M23) causing almond leaf scorch disease in California.</title>
        <authorList>
            <person name="Chen J."/>
            <person name="Xie G."/>
            <person name="Han S."/>
            <person name="Chertkov O."/>
            <person name="Sims D."/>
            <person name="Civerolo E.L."/>
        </authorList>
    </citation>
    <scope>NUCLEOTIDE SEQUENCE [LARGE SCALE GENOMIC DNA]</scope>
    <source>
        <strain>M23</strain>
    </source>
</reference>
<gene>
    <name evidence="1" type="primary">mtnC</name>
    <name type="ordered locus">XfasM23_1345</name>
</gene>
<sequence length="232" mass="25992">MSMPQAILTDIEGTTSSLSFVKEVLFPYARRALPDFVREHREHPDVMPWLDQVANETGTAFSEEALVATLQTWIDTDSKHTALKALQGMIWTSGYQNGDFTAHLYPDAVQRLRAWHAANVPLYVYSSGSVPAQQLFFRHSHAGDLSGLFSGWFDTQIGGKRESTSYQRIAQHIGIAPAGIVFLSDVIEELNAAAQIGLNTVLIDRRDDYPTPRHLKDTDRHLHLDSFAQLPF</sequence>
<feature type="chain" id="PRO_0000357437" description="Enolase-phosphatase E1">
    <location>
        <begin position="1"/>
        <end position="232"/>
    </location>
</feature>